<comment type="function">
    <text evidence="1">Catalyzes the formation of the alpha-1,6-glucosidic linkages in glycogen by scission of a 1,4-alpha-linked oligosaccharide from growing alpha-1,4-glucan chains and the subsequent attachment of the oligosaccharide to the alpha-1,6 position.</text>
</comment>
<comment type="catalytic activity">
    <reaction evidence="1">
        <text>Transfers a segment of a (1-&gt;4)-alpha-D-glucan chain to a primary hydroxy group in a similar glucan chain.</text>
        <dbReference type="EC" id="2.4.1.18"/>
    </reaction>
</comment>
<comment type="pathway">
    <text evidence="1">Glycan biosynthesis; glycogen biosynthesis.</text>
</comment>
<comment type="subunit">
    <text evidence="1">Monomer.</text>
</comment>
<comment type="similarity">
    <text evidence="1">Belongs to the glycosyl hydrolase 13 family. GlgB subfamily.</text>
</comment>
<organism>
    <name type="scientific">Yersinia pestis bv. Antiqua (strain Nepal516)</name>
    <dbReference type="NCBI Taxonomy" id="377628"/>
    <lineage>
        <taxon>Bacteria</taxon>
        <taxon>Pseudomonadati</taxon>
        <taxon>Pseudomonadota</taxon>
        <taxon>Gammaproteobacteria</taxon>
        <taxon>Enterobacterales</taxon>
        <taxon>Yersiniaceae</taxon>
        <taxon>Yersinia</taxon>
    </lineage>
</organism>
<keyword id="KW-0119">Carbohydrate metabolism</keyword>
<keyword id="KW-0320">Glycogen biosynthesis</keyword>
<keyword id="KW-0321">Glycogen metabolism</keyword>
<keyword id="KW-0328">Glycosyltransferase</keyword>
<keyword id="KW-0808">Transferase</keyword>
<proteinExistence type="inferred from homology"/>
<reference key="1">
    <citation type="journal article" date="2006" name="J. Bacteriol.">
        <title>Complete genome sequence of Yersinia pestis strains Antiqua and Nepal516: evidence of gene reduction in an emerging pathogen.</title>
        <authorList>
            <person name="Chain P.S.G."/>
            <person name="Hu P."/>
            <person name="Malfatti S.A."/>
            <person name="Radnedge L."/>
            <person name="Larimer F."/>
            <person name="Vergez L.M."/>
            <person name="Worsham P."/>
            <person name="Chu M.C."/>
            <person name="Andersen G.L."/>
        </authorList>
    </citation>
    <scope>NUCLEOTIDE SEQUENCE [LARGE SCALE GENOMIC DNA]</scope>
    <source>
        <strain>Nepal516</strain>
    </source>
</reference>
<reference key="2">
    <citation type="submission" date="2009-04" db="EMBL/GenBank/DDBJ databases">
        <title>Yersinia pestis Nepal516A whole genome shotgun sequencing project.</title>
        <authorList>
            <person name="Plunkett G. III"/>
            <person name="Anderson B.D."/>
            <person name="Baumler D.J."/>
            <person name="Burland V."/>
            <person name="Cabot E.L."/>
            <person name="Glasner J.D."/>
            <person name="Mau B."/>
            <person name="Neeno-Eckwall E."/>
            <person name="Perna N.T."/>
            <person name="Munk A.C."/>
            <person name="Tapia R."/>
            <person name="Green L.D."/>
            <person name="Rogers Y.C."/>
            <person name="Detter J.C."/>
            <person name="Bruce D.C."/>
            <person name="Brettin T.S."/>
        </authorList>
    </citation>
    <scope>NUCLEOTIDE SEQUENCE [LARGE SCALE GENOMIC DNA]</scope>
    <source>
        <strain>Nepal516</strain>
    </source>
</reference>
<feature type="chain" id="PRO_0000260721" description="1,4-alpha-glucan branching enzyme GlgB">
    <location>
        <begin position="1"/>
        <end position="727"/>
    </location>
</feature>
<feature type="active site" description="Nucleophile" evidence="1">
    <location>
        <position position="405"/>
    </location>
</feature>
<feature type="active site" description="Proton donor" evidence="1">
    <location>
        <position position="458"/>
    </location>
</feature>
<sequence>MSVLPDRQVINQLISGHYGDPFSILGMHETSQGLQICALLPDAREVWLVETENGRRIAQLTLEDPRGFFIAQLTRRKKSFRYQFAVTWQENPQIIEDPYRFGPLLQDIDSWLLAEGTHLRPYERLGAHLMSLDGVSGVSFAVWAPNAQRVSVVGDFNFWDGRRHPMRLRRENGIWELFLPGIEAGQLYKFEIIDCHGQVRLKADPYAFEAQMRPETASLISPLPDVVKSSAARQKANDLCSPVSIYEVHLGSWRRHTDNNFWLSYRELADQLVEYVKYMGFTHVELLPINEHPFDGSWGYQPLGLYAPTRRYGTPEDFKAFVAKFHQAGINVILDWVPGHFPSDEHGLSTFDGTALYEYADPREGYHQDWNTLIYNYGRNEVRNYLAGNAFYWMERFGIDALRIDAVASMIYRDYSRAEGQWVPNYYGGRENLEAIAFLRYTNKTIGVERPGSVTMAEESTDFPGVTLPPDIGGLGFNYKWNMGWMHDTLNYMQCDPVHRKYHHNLMTFGMLYAYTENFILPLSHDEVVHGKRSILDRMPGDAWQKFANLRAYYAFMWAHPGKKLLFMGCEFAQGREWNFETSLDWHLLDDENGWHSGVQRLVRDLNHCYRQYAPLYEWDYQPAGFEWLVVDDHENSVFAFLRRDAEGHELIAISNFTPVPRYHYRVGIPQGGHYREVLNSDSAFYCGSNLGNQGGIDSHHVRSHNHEHSLLLTLPPLATIYLLREN</sequence>
<evidence type="ECO:0000255" key="1">
    <source>
        <dbReference type="HAMAP-Rule" id="MF_00685"/>
    </source>
</evidence>
<accession>Q1CDL3</accession>
<accession>D1Q1S9</accession>
<protein>
    <recommendedName>
        <fullName evidence="1">1,4-alpha-glucan branching enzyme GlgB</fullName>
        <ecNumber evidence="1">2.4.1.18</ecNumber>
    </recommendedName>
    <alternativeName>
        <fullName evidence="1">1,4-alpha-D-glucan:1,4-alpha-D-glucan 6-glucosyl-transferase</fullName>
    </alternativeName>
    <alternativeName>
        <fullName evidence="1">Alpha-(1-&gt;4)-glucan branching enzyme</fullName>
    </alternativeName>
    <alternativeName>
        <fullName evidence="1">Glycogen branching enzyme</fullName>
        <shortName evidence="1">BE</shortName>
    </alternativeName>
</protein>
<dbReference type="EC" id="2.4.1.18" evidence="1"/>
<dbReference type="EMBL" id="CP000305">
    <property type="protein sequence ID" value="ABG19917.1"/>
    <property type="molecule type" value="Genomic_DNA"/>
</dbReference>
<dbReference type="EMBL" id="ACNQ01000019">
    <property type="protein sequence ID" value="EEO74482.1"/>
    <property type="molecule type" value="Genomic_DNA"/>
</dbReference>
<dbReference type="RefSeq" id="WP_002209500.1">
    <property type="nucleotide sequence ID" value="NZ_ACNQ01000019.1"/>
</dbReference>
<dbReference type="SMR" id="Q1CDL3"/>
<dbReference type="CAZy" id="CBM48">
    <property type="family name" value="Carbohydrate-Binding Module Family 48"/>
</dbReference>
<dbReference type="CAZy" id="GH13">
    <property type="family name" value="Glycoside Hydrolase Family 13"/>
</dbReference>
<dbReference type="GeneID" id="57974762"/>
<dbReference type="KEGG" id="ypn:YPN_3590"/>
<dbReference type="HOGENOM" id="CLU_004245_3_2_6"/>
<dbReference type="UniPathway" id="UPA00164"/>
<dbReference type="Proteomes" id="UP000008936">
    <property type="component" value="Chromosome"/>
</dbReference>
<dbReference type="GO" id="GO:0005829">
    <property type="term" value="C:cytosol"/>
    <property type="evidence" value="ECO:0007669"/>
    <property type="project" value="TreeGrafter"/>
</dbReference>
<dbReference type="GO" id="GO:0003844">
    <property type="term" value="F:1,4-alpha-glucan branching enzyme activity"/>
    <property type="evidence" value="ECO:0007669"/>
    <property type="project" value="UniProtKB-UniRule"/>
</dbReference>
<dbReference type="GO" id="GO:0043169">
    <property type="term" value="F:cation binding"/>
    <property type="evidence" value="ECO:0007669"/>
    <property type="project" value="InterPro"/>
</dbReference>
<dbReference type="GO" id="GO:0004553">
    <property type="term" value="F:hydrolase activity, hydrolyzing O-glycosyl compounds"/>
    <property type="evidence" value="ECO:0007669"/>
    <property type="project" value="InterPro"/>
</dbReference>
<dbReference type="GO" id="GO:0005978">
    <property type="term" value="P:glycogen biosynthetic process"/>
    <property type="evidence" value="ECO:0007669"/>
    <property type="project" value="UniProtKB-UniRule"/>
</dbReference>
<dbReference type="CDD" id="cd11322">
    <property type="entry name" value="AmyAc_Glg_BE"/>
    <property type="match status" value="1"/>
</dbReference>
<dbReference type="CDD" id="cd02855">
    <property type="entry name" value="E_set_GBE_prok_N"/>
    <property type="match status" value="1"/>
</dbReference>
<dbReference type="FunFam" id="2.60.40.10:FF:000169">
    <property type="entry name" value="1,4-alpha-glucan branching enzyme GlgB"/>
    <property type="match status" value="1"/>
</dbReference>
<dbReference type="FunFam" id="2.60.40.1180:FF:000002">
    <property type="entry name" value="1,4-alpha-glucan branching enzyme GlgB"/>
    <property type="match status" value="1"/>
</dbReference>
<dbReference type="FunFam" id="3.20.20.80:FF:000003">
    <property type="entry name" value="1,4-alpha-glucan branching enzyme GlgB"/>
    <property type="match status" value="1"/>
</dbReference>
<dbReference type="Gene3D" id="3.20.20.80">
    <property type="entry name" value="Glycosidases"/>
    <property type="match status" value="1"/>
</dbReference>
<dbReference type="Gene3D" id="2.60.40.1180">
    <property type="entry name" value="Golgi alpha-mannosidase II"/>
    <property type="match status" value="1"/>
</dbReference>
<dbReference type="Gene3D" id="2.60.40.10">
    <property type="entry name" value="Immunoglobulins"/>
    <property type="match status" value="2"/>
</dbReference>
<dbReference type="HAMAP" id="MF_00685">
    <property type="entry name" value="GlgB"/>
    <property type="match status" value="1"/>
</dbReference>
<dbReference type="InterPro" id="IPR006048">
    <property type="entry name" value="A-amylase/branching_C"/>
</dbReference>
<dbReference type="InterPro" id="IPR037439">
    <property type="entry name" value="Branching_enzy"/>
</dbReference>
<dbReference type="InterPro" id="IPR006407">
    <property type="entry name" value="GlgB"/>
</dbReference>
<dbReference type="InterPro" id="IPR054169">
    <property type="entry name" value="GlgB_N"/>
</dbReference>
<dbReference type="InterPro" id="IPR044143">
    <property type="entry name" value="GlgB_N_E_set_prok"/>
</dbReference>
<dbReference type="InterPro" id="IPR006047">
    <property type="entry name" value="Glyco_hydro_13_cat_dom"/>
</dbReference>
<dbReference type="InterPro" id="IPR004193">
    <property type="entry name" value="Glyco_hydro_13_N"/>
</dbReference>
<dbReference type="InterPro" id="IPR013780">
    <property type="entry name" value="Glyco_hydro_b"/>
</dbReference>
<dbReference type="InterPro" id="IPR017853">
    <property type="entry name" value="Glycoside_hydrolase_SF"/>
</dbReference>
<dbReference type="InterPro" id="IPR013783">
    <property type="entry name" value="Ig-like_fold"/>
</dbReference>
<dbReference type="InterPro" id="IPR014756">
    <property type="entry name" value="Ig_E-set"/>
</dbReference>
<dbReference type="NCBIfam" id="TIGR01515">
    <property type="entry name" value="branching_enzym"/>
    <property type="match status" value="1"/>
</dbReference>
<dbReference type="NCBIfam" id="NF003811">
    <property type="entry name" value="PRK05402.1"/>
    <property type="match status" value="1"/>
</dbReference>
<dbReference type="NCBIfam" id="NF008967">
    <property type="entry name" value="PRK12313.1"/>
    <property type="match status" value="1"/>
</dbReference>
<dbReference type="PANTHER" id="PTHR43651">
    <property type="entry name" value="1,4-ALPHA-GLUCAN-BRANCHING ENZYME"/>
    <property type="match status" value="1"/>
</dbReference>
<dbReference type="PANTHER" id="PTHR43651:SF3">
    <property type="entry name" value="1,4-ALPHA-GLUCAN-BRANCHING ENZYME"/>
    <property type="match status" value="1"/>
</dbReference>
<dbReference type="Pfam" id="PF00128">
    <property type="entry name" value="Alpha-amylase"/>
    <property type="match status" value="1"/>
</dbReference>
<dbReference type="Pfam" id="PF02806">
    <property type="entry name" value="Alpha-amylase_C"/>
    <property type="match status" value="1"/>
</dbReference>
<dbReference type="Pfam" id="PF02922">
    <property type="entry name" value="CBM_48"/>
    <property type="match status" value="1"/>
</dbReference>
<dbReference type="Pfam" id="PF22019">
    <property type="entry name" value="GlgB_N"/>
    <property type="match status" value="1"/>
</dbReference>
<dbReference type="PIRSF" id="PIRSF000463">
    <property type="entry name" value="GlgB"/>
    <property type="match status" value="1"/>
</dbReference>
<dbReference type="SMART" id="SM00642">
    <property type="entry name" value="Aamy"/>
    <property type="match status" value="1"/>
</dbReference>
<dbReference type="SUPFAM" id="SSF51445">
    <property type="entry name" value="(Trans)glycosidases"/>
    <property type="match status" value="1"/>
</dbReference>
<dbReference type="SUPFAM" id="SSF81296">
    <property type="entry name" value="E set domains"/>
    <property type="match status" value="2"/>
</dbReference>
<dbReference type="SUPFAM" id="SSF51011">
    <property type="entry name" value="Glycosyl hydrolase domain"/>
    <property type="match status" value="1"/>
</dbReference>
<gene>
    <name evidence="1" type="primary">glgB</name>
    <name type="ordered locus">YPN_3590</name>
    <name type="ORF">YP516_4079</name>
</gene>
<name>GLGB_YERPN</name>